<organism>
    <name type="scientific">Neisseria gonorrhoeae</name>
    <dbReference type="NCBI Taxonomy" id="485"/>
    <lineage>
        <taxon>Bacteria</taxon>
        <taxon>Pseudomonadati</taxon>
        <taxon>Pseudomonadota</taxon>
        <taxon>Betaproteobacteria</taxon>
        <taxon>Neisseriales</taxon>
        <taxon>Neisseriaceae</taxon>
        <taxon>Neisseria</taxon>
    </lineage>
</organism>
<sequence length="162" mass="17731">MLKITIIAACAENLCIGAGNAMPWHIPEDFAFFKVYTLGKPVIMGRKTWESLPVKPLPGRRNIVISRQADYCAAGAETVASLEVALALCAGAEEAVIMGGAQIYGQAMPLATDLRITEVDLSVEGDAFFPEIDRTHWREAERTERRVSSKGVAYTFVHYLGK</sequence>
<gene>
    <name type="primary">folA</name>
</gene>
<accession>P04174</accession>
<evidence type="ECO:0000250" key="1"/>
<evidence type="ECO:0000255" key="2">
    <source>
        <dbReference type="PROSITE-ProRule" id="PRU00660"/>
    </source>
</evidence>
<evidence type="ECO:0000305" key="3"/>
<dbReference type="EC" id="1.5.1.3"/>
<dbReference type="PIR" id="A00393">
    <property type="entry name" value="RDNHD"/>
</dbReference>
<dbReference type="SMR" id="P04174"/>
<dbReference type="ChEMBL" id="CHEMBL3565"/>
<dbReference type="DrugCentral" id="P04174"/>
<dbReference type="UniPathway" id="UPA00077">
    <property type="reaction ID" value="UER00158"/>
</dbReference>
<dbReference type="GO" id="GO:0005829">
    <property type="term" value="C:cytosol"/>
    <property type="evidence" value="ECO:0007669"/>
    <property type="project" value="TreeGrafter"/>
</dbReference>
<dbReference type="GO" id="GO:0004146">
    <property type="term" value="F:dihydrofolate reductase activity"/>
    <property type="evidence" value="ECO:0007669"/>
    <property type="project" value="UniProtKB-EC"/>
</dbReference>
<dbReference type="GO" id="GO:0050661">
    <property type="term" value="F:NADP binding"/>
    <property type="evidence" value="ECO:0007669"/>
    <property type="project" value="InterPro"/>
</dbReference>
<dbReference type="GO" id="GO:0046452">
    <property type="term" value="P:dihydrofolate metabolic process"/>
    <property type="evidence" value="ECO:0007669"/>
    <property type="project" value="TreeGrafter"/>
</dbReference>
<dbReference type="GO" id="GO:0046655">
    <property type="term" value="P:folic acid metabolic process"/>
    <property type="evidence" value="ECO:0007669"/>
    <property type="project" value="TreeGrafter"/>
</dbReference>
<dbReference type="GO" id="GO:0006730">
    <property type="term" value="P:one-carbon metabolic process"/>
    <property type="evidence" value="ECO:0007669"/>
    <property type="project" value="UniProtKB-KW"/>
</dbReference>
<dbReference type="GO" id="GO:0046677">
    <property type="term" value="P:response to antibiotic"/>
    <property type="evidence" value="ECO:0007669"/>
    <property type="project" value="UniProtKB-KW"/>
</dbReference>
<dbReference type="GO" id="GO:0046654">
    <property type="term" value="P:tetrahydrofolate biosynthetic process"/>
    <property type="evidence" value="ECO:0007669"/>
    <property type="project" value="UniProtKB-UniPathway"/>
</dbReference>
<dbReference type="CDD" id="cd00209">
    <property type="entry name" value="DHFR"/>
    <property type="match status" value="1"/>
</dbReference>
<dbReference type="FunFam" id="3.40.430.10:FF:000001">
    <property type="entry name" value="Dihydrofolate reductase"/>
    <property type="match status" value="1"/>
</dbReference>
<dbReference type="Gene3D" id="3.40.430.10">
    <property type="entry name" value="Dihydrofolate Reductase, subunit A"/>
    <property type="match status" value="1"/>
</dbReference>
<dbReference type="InterPro" id="IPR012259">
    <property type="entry name" value="DHFR"/>
</dbReference>
<dbReference type="InterPro" id="IPR024072">
    <property type="entry name" value="DHFR-like_dom_sf"/>
</dbReference>
<dbReference type="InterPro" id="IPR017925">
    <property type="entry name" value="DHFR_CS"/>
</dbReference>
<dbReference type="InterPro" id="IPR001796">
    <property type="entry name" value="DHFR_dom"/>
</dbReference>
<dbReference type="PANTHER" id="PTHR48069">
    <property type="entry name" value="DIHYDROFOLATE REDUCTASE"/>
    <property type="match status" value="1"/>
</dbReference>
<dbReference type="PANTHER" id="PTHR48069:SF3">
    <property type="entry name" value="DIHYDROFOLATE REDUCTASE"/>
    <property type="match status" value="1"/>
</dbReference>
<dbReference type="Pfam" id="PF00186">
    <property type="entry name" value="DHFR_1"/>
    <property type="match status" value="1"/>
</dbReference>
<dbReference type="PIRSF" id="PIRSF000194">
    <property type="entry name" value="DHFR"/>
    <property type="match status" value="1"/>
</dbReference>
<dbReference type="PRINTS" id="PR00070">
    <property type="entry name" value="DHFR"/>
</dbReference>
<dbReference type="SUPFAM" id="SSF53597">
    <property type="entry name" value="Dihydrofolate reductase-like"/>
    <property type="match status" value="1"/>
</dbReference>
<dbReference type="PROSITE" id="PS00075">
    <property type="entry name" value="DHFR_1"/>
    <property type="match status" value="1"/>
</dbReference>
<dbReference type="PROSITE" id="PS51330">
    <property type="entry name" value="DHFR_2"/>
    <property type="match status" value="1"/>
</dbReference>
<feature type="chain" id="PRO_0000186401" description="Dihydrofolate reductase">
    <location>
        <begin position="1"/>
        <end position="162"/>
    </location>
</feature>
<feature type="domain" description="DHFR" evidence="2">
    <location>
        <begin position="3"/>
        <end position="161"/>
    </location>
</feature>
<feature type="binding site" evidence="1">
    <location>
        <begin position="7"/>
        <end position="9"/>
    </location>
    <ligand>
        <name>substrate</name>
    </ligand>
</feature>
<feature type="binding site" evidence="1">
    <location>
        <begin position="8"/>
        <end position="9"/>
    </location>
    <ligand>
        <name>NADP(+)</name>
        <dbReference type="ChEBI" id="CHEBI:58349"/>
    </ligand>
</feature>
<feature type="binding site" evidence="1">
    <location>
        <begin position="16"/>
        <end position="21"/>
    </location>
    <ligand>
        <name>NADP(+)</name>
        <dbReference type="ChEBI" id="CHEBI:58349"/>
    </ligand>
</feature>
<feature type="binding site" evidence="1">
    <location>
        <position position="29"/>
    </location>
    <ligand>
        <name>substrate</name>
    </ligand>
</feature>
<feature type="binding site" evidence="1">
    <location>
        <begin position="45"/>
        <end position="48"/>
    </location>
    <ligand>
        <name>NADP(+)</name>
        <dbReference type="ChEBI" id="CHEBI:58349"/>
    </ligand>
</feature>
<feature type="binding site" evidence="1">
    <location>
        <position position="60"/>
    </location>
    <ligand>
        <name>substrate</name>
    </ligand>
</feature>
<feature type="binding site" evidence="1">
    <location>
        <begin position="65"/>
        <end position="68"/>
    </location>
    <ligand>
        <name>NADP(+)</name>
        <dbReference type="ChEBI" id="CHEBI:58349"/>
    </ligand>
</feature>
<feature type="binding site" evidence="1">
    <location>
        <begin position="98"/>
        <end position="103"/>
    </location>
    <ligand>
        <name>NADP(+)</name>
        <dbReference type="ChEBI" id="CHEBI:58349"/>
    </ligand>
</feature>
<feature type="binding site" evidence="1">
    <location>
        <position position="117"/>
    </location>
    <ligand>
        <name>substrate</name>
    </ligand>
</feature>
<protein>
    <recommendedName>
        <fullName>Dihydrofolate reductase</fullName>
        <ecNumber>1.5.1.3</ecNumber>
    </recommendedName>
</protein>
<keyword id="KW-0046">Antibiotic resistance</keyword>
<keyword id="KW-0903">Direct protein sequencing</keyword>
<keyword id="KW-0521">NADP</keyword>
<keyword id="KW-0554">One-carbon metabolism</keyword>
<keyword id="KW-0560">Oxidoreductase</keyword>
<keyword id="KW-0817">Trimethoprim resistance</keyword>
<comment type="function">
    <text evidence="1">Key enzyme in folate metabolism. Catalyzes an essential reaction for de novo glycine and purine synthesis, and for DNA precursor synthesis (By similarity).</text>
</comment>
<comment type="catalytic activity">
    <reaction evidence="2">
        <text>(6S)-5,6,7,8-tetrahydrofolate + NADP(+) = 7,8-dihydrofolate + NADPH + H(+)</text>
        <dbReference type="Rhea" id="RHEA:15009"/>
        <dbReference type="ChEBI" id="CHEBI:15378"/>
        <dbReference type="ChEBI" id="CHEBI:57451"/>
        <dbReference type="ChEBI" id="CHEBI:57453"/>
        <dbReference type="ChEBI" id="CHEBI:57783"/>
        <dbReference type="ChEBI" id="CHEBI:58349"/>
        <dbReference type="EC" id="1.5.1.3"/>
    </reaction>
</comment>
<comment type="pathway">
    <text>Cofactor biosynthesis; tetrahydrofolate biosynthesis; 5,6,7,8-tetrahydrofolate from 7,8-dihydrofolate: step 1/1.</text>
</comment>
<comment type="miscellaneous">
    <text>Strain T47/F62 is trimethoprim resistant by overproduction of DHFR.</text>
</comment>
<comment type="similarity">
    <text evidence="3">Belongs to the dihydrofolate reductase family.</text>
</comment>
<name>DYR_NEIGO</name>
<reference key="1">
    <citation type="journal article" date="1984" name="J. Biol. Chem.">
        <title>Characterization and amino acid sequence of Neisseria gonorrhoeae dihydrofolate reductase.</title>
        <authorList>
            <person name="Baccanari D.P."/>
            <person name="Tansik R.L."/>
            <person name="Paterson S.J."/>
            <person name="Stone D."/>
        </authorList>
    </citation>
    <scope>PROTEIN SEQUENCE</scope>
    <source>
        <strain>T47/F62</strain>
    </source>
</reference>
<proteinExistence type="evidence at protein level"/>